<comment type="function">
    <text evidence="2">Required for the transposition of the insertion element.</text>
</comment>
<comment type="similarity">
    <text evidence="2">Belongs to the transposase IS30 family.</text>
</comment>
<comment type="caution">
    <text evidence="2">It is uncertain whether Met-1 or Met-15 is the initiator.</text>
</comment>
<gene>
    <name type="primary">IS1086</name>
    <name type="ordered locus">Rmet_2842</name>
    <name type="ordered locus">Rmet_4004</name>
    <name type="ordered locus">Rmet_6282</name>
    <name type="ORF">RMe0033</name>
</gene>
<sequence>MTRTKYQQLQPEERMRIEIWKAEDVSLRAMARRLGRAPSTLMRELRRNATARGGYGAMSAQACRTQRLKASRPVAKLAPDGVLWGVVRHFLDQKWSPQEISATLKRAFPDQPDLNVSHETIYNAIYAYPRGELRRQLIACLRQARTKRLPRSRGTDRRGQIPDMVSIHVRPPEVNDRLMPGHWEGDLIKGAGNQSAVGVLVERMSRAVLLVKMPDATAASALAGFTGKLQSLVAPLRQTLTYDQGREMARHAELSAATGVRVYFCDPHSPWQRGTCENTNGLLRQYLPKGTDLSVYSQEELDAIADSLNGRPRKTLNWHSPLQVLAQVLANPTDRLPVQ</sequence>
<accession>P37248</accession>
<accession>Q5NV33</accession>
<name>TRA8_CUPMC</name>
<protein>
    <recommendedName>
        <fullName>Transposase for insertion sequence element IS1086</fullName>
    </recommendedName>
</protein>
<reference key="1">
    <citation type="journal article" date="1992" name="J. Bacteriol.">
        <title>Cloning and sequencing of IS1086, an Alcaligenes eutrophus insertion element related to IS30 and IS4351.</title>
        <authorList>
            <person name="Dong Q."/>
            <person name="Sadouk A."/>
            <person name="van der Lelie D."/>
            <person name="Taghavi S."/>
            <person name="Ferhat A."/>
            <person name="Nuyten J.M."/>
            <person name="Borremans B."/>
            <person name="Mergeay M."/>
            <person name="Toussaint A."/>
        </authorList>
    </citation>
    <scope>NUCLEOTIDE SEQUENCE [GENOMIC DNA]</scope>
</reference>
<reference key="2">
    <citation type="journal article" date="2010" name="PLoS ONE">
        <title>The complete genome sequence of Cupriavidus metallidurans strain CH34, a master survivalist in harsh and anthropogenic environments.</title>
        <authorList>
            <person name="Janssen P.J."/>
            <person name="Van Houdt R."/>
            <person name="Moors H."/>
            <person name="Monsieurs P."/>
            <person name="Morin N."/>
            <person name="Michaux A."/>
            <person name="Benotmane M.A."/>
            <person name="Leys N."/>
            <person name="Vallaeys T."/>
            <person name="Lapidus A."/>
            <person name="Monchy S."/>
            <person name="Medigue C."/>
            <person name="Taghavi S."/>
            <person name="McCorkle S."/>
            <person name="Dunn J."/>
            <person name="van der Lelie D."/>
            <person name="Mergeay M."/>
        </authorList>
    </citation>
    <scope>NUCLEOTIDE SEQUENCE [LARGE SCALE GENOMIC DNA]</scope>
    <source>
        <strain>ATCC 43123 / DSM 2839 / NBRC 102507 / CH34</strain>
        <plasmid>megaplasmid CH34</plasmid>
        <plasmid>pMOL28</plasmid>
    </source>
</reference>
<reference key="3">
    <citation type="submission" date="2004-10" db="EMBL/GenBank/DDBJ databases">
        <title>Sequence and features of the Ralstonia metallidurans CH34 heavy metal plasmids pMOL28 and pMOL30.</title>
        <authorList>
            <person name="van der Lelie D."/>
            <person name="Monchy S."/>
            <person name="Taghavi S."/>
            <person name="McCorkle S."/>
            <person name="Dunn J."/>
            <person name="Benotmane M."/>
            <person name="Vallaeys T."/>
            <person name="Lapidus A."/>
            <person name="Mergeay M."/>
        </authorList>
    </citation>
    <scope>NUCLEOTIDE SEQUENCE [LARGE SCALE GENOMIC DNA]</scope>
    <source>
        <strain>ATCC 43123 / DSM 2839 / NBRC 102507 / CH34</strain>
        <plasmid>pMOL28</plasmid>
    </source>
</reference>
<geneLocation type="plasmid">
    <name>megaplasmid CH34</name>
</geneLocation>
<geneLocation type="plasmid">
    <name>pMOL28</name>
</geneLocation>
<evidence type="ECO:0000255" key="1">
    <source>
        <dbReference type="PROSITE-ProRule" id="PRU00457"/>
    </source>
</evidence>
<evidence type="ECO:0000305" key="2"/>
<organism>
    <name type="scientific">Cupriavidus metallidurans (strain ATCC 43123 / DSM 2839 / NBRC 102507 / CH34)</name>
    <name type="common">Ralstonia metallidurans</name>
    <dbReference type="NCBI Taxonomy" id="266264"/>
    <lineage>
        <taxon>Bacteria</taxon>
        <taxon>Pseudomonadati</taxon>
        <taxon>Pseudomonadota</taxon>
        <taxon>Betaproteobacteria</taxon>
        <taxon>Burkholderiales</taxon>
        <taxon>Burkholderiaceae</taxon>
        <taxon>Cupriavidus</taxon>
    </lineage>
</organism>
<keyword id="KW-0233">DNA recombination</keyword>
<keyword id="KW-0238">DNA-binding</keyword>
<keyword id="KW-0614">Plasmid</keyword>
<keyword id="KW-1185">Reference proteome</keyword>
<keyword id="KW-0814">Transposable element</keyword>
<keyword id="KW-0815">Transposition</keyword>
<dbReference type="EMBL" id="X58441">
    <property type="protein sequence ID" value="CAA41347.1"/>
    <property type="molecule type" value="Genomic_DNA"/>
</dbReference>
<dbReference type="EMBL" id="CP000352">
    <property type="protein sequence ID" value="ABF09715.1"/>
    <property type="molecule type" value="Genomic_DNA"/>
</dbReference>
<dbReference type="EMBL" id="CP000353">
    <property type="protein sequence ID" value="ABF10872.1"/>
    <property type="molecule type" value="Genomic_DNA"/>
</dbReference>
<dbReference type="EMBL" id="X90708">
    <property type="protein sequence ID" value="CAI30179.1"/>
    <property type="molecule type" value="Genomic_DNA"/>
</dbReference>
<dbReference type="EMBL" id="CP000355">
    <property type="protein sequence ID" value="ABF13141.1"/>
    <property type="molecule type" value="Genomic_DNA"/>
</dbReference>
<dbReference type="RefSeq" id="WP_011239917.1">
    <property type="nucleotide sequence ID" value="NC_006525.1"/>
</dbReference>
<dbReference type="RefSeq" id="YP_161657.1">
    <property type="nucleotide sequence ID" value="NC_006525.1"/>
</dbReference>
<dbReference type="KEGG" id="rme:Rmet_2842"/>
<dbReference type="KEGG" id="rme:Rmet_4004"/>
<dbReference type="KEGG" id="rme:Rmet_6282"/>
<dbReference type="eggNOG" id="COG2826">
    <property type="taxonomic scope" value="Bacteria"/>
</dbReference>
<dbReference type="HOGENOM" id="CLU_035706_0_0_4"/>
<dbReference type="Proteomes" id="UP000002429">
    <property type="component" value="Chromosome"/>
</dbReference>
<dbReference type="Proteomes" id="UP000002429">
    <property type="component" value="Plasmid megaplasmid CH34"/>
</dbReference>
<dbReference type="Proteomes" id="UP000002429">
    <property type="component" value="Plasmid pMOL28"/>
</dbReference>
<dbReference type="GO" id="GO:0005829">
    <property type="term" value="C:cytosol"/>
    <property type="evidence" value="ECO:0007669"/>
    <property type="project" value="TreeGrafter"/>
</dbReference>
<dbReference type="GO" id="GO:0003677">
    <property type="term" value="F:DNA binding"/>
    <property type="evidence" value="ECO:0007669"/>
    <property type="project" value="UniProtKB-KW"/>
</dbReference>
<dbReference type="GO" id="GO:0004803">
    <property type="term" value="F:transposase activity"/>
    <property type="evidence" value="ECO:0007669"/>
    <property type="project" value="InterPro"/>
</dbReference>
<dbReference type="GO" id="GO:0015074">
    <property type="term" value="P:DNA integration"/>
    <property type="evidence" value="ECO:0007669"/>
    <property type="project" value="InterPro"/>
</dbReference>
<dbReference type="GO" id="GO:0006313">
    <property type="term" value="P:DNA transposition"/>
    <property type="evidence" value="ECO:0007669"/>
    <property type="project" value="InterPro"/>
</dbReference>
<dbReference type="Gene3D" id="3.30.420.10">
    <property type="entry name" value="Ribonuclease H-like superfamily/Ribonuclease H"/>
    <property type="match status" value="1"/>
</dbReference>
<dbReference type="InterPro" id="IPR001584">
    <property type="entry name" value="Integrase_cat-core"/>
</dbReference>
<dbReference type="InterPro" id="IPR025246">
    <property type="entry name" value="IS30-like_HTH"/>
</dbReference>
<dbReference type="InterPro" id="IPR012337">
    <property type="entry name" value="RNaseH-like_sf"/>
</dbReference>
<dbReference type="InterPro" id="IPR036397">
    <property type="entry name" value="RNaseH_sf"/>
</dbReference>
<dbReference type="InterPro" id="IPR051917">
    <property type="entry name" value="Transposase-Integrase"/>
</dbReference>
<dbReference type="InterPro" id="IPR053392">
    <property type="entry name" value="Transposase_IS30-like"/>
</dbReference>
<dbReference type="InterPro" id="IPR001598">
    <property type="entry name" value="Transposase_IS30_CS"/>
</dbReference>
<dbReference type="NCBIfam" id="NF033563">
    <property type="entry name" value="transpos_IS30"/>
    <property type="match status" value="1"/>
</dbReference>
<dbReference type="PANTHER" id="PTHR10948">
    <property type="entry name" value="TRANSPOSASE"/>
    <property type="match status" value="1"/>
</dbReference>
<dbReference type="PANTHER" id="PTHR10948:SF23">
    <property type="entry name" value="TRANSPOSASE INSI FOR INSERTION SEQUENCE ELEMENT IS30A-RELATED"/>
    <property type="match status" value="1"/>
</dbReference>
<dbReference type="Pfam" id="PF13936">
    <property type="entry name" value="HTH_38"/>
    <property type="match status" value="1"/>
</dbReference>
<dbReference type="Pfam" id="PF00665">
    <property type="entry name" value="rve"/>
    <property type="match status" value="1"/>
</dbReference>
<dbReference type="SUPFAM" id="SSF53098">
    <property type="entry name" value="Ribonuclease H-like"/>
    <property type="match status" value="1"/>
</dbReference>
<dbReference type="PROSITE" id="PS50994">
    <property type="entry name" value="INTEGRASE"/>
    <property type="match status" value="1"/>
</dbReference>
<dbReference type="PROSITE" id="PS01043">
    <property type="entry name" value="TRANSPOSASE_IS30"/>
    <property type="match status" value="1"/>
</dbReference>
<feature type="chain" id="PRO_0000211894" description="Transposase for insertion sequence element IS1086">
    <location>
        <begin position="1"/>
        <end position="339"/>
    </location>
</feature>
<feature type="domain" description="Integrase catalytic" evidence="1">
    <location>
        <begin position="176"/>
        <end position="329"/>
    </location>
</feature>
<feature type="sequence conflict" description="In Ref. 1; CAA41347." evidence="2" ref="1">
    <original>A</original>
    <variation>G</variation>
    <location>
        <position position="102"/>
    </location>
</feature>
<proteinExistence type="inferred from homology"/>